<proteinExistence type="inferred from homology"/>
<comment type="function">
    <text evidence="1">F(1)F(0) ATP synthase produces ATP from ADP in the presence of a proton or sodium gradient. F-type ATPases consist of two structural domains, F(1) containing the extramembraneous catalytic core and F(0) containing the membrane proton channel, linked together by a central stalk and a peripheral stalk. During catalysis, ATP synthesis in the catalytic domain of F(1) is coupled via a rotary mechanism of the central stalk subunits to proton translocation.</text>
</comment>
<comment type="function">
    <text evidence="1">This protein is part of the stalk that links CF(0) to CF(1). It either transmits conformational changes from CF(0) to CF(1) or is implicated in proton conduction.</text>
</comment>
<comment type="subunit">
    <text evidence="1">F-type ATPases have 2 components, F(1) - the catalytic core - and F(0) - the membrane proton channel. F(1) has five subunits: alpha(3), beta(3), gamma(1), delta(1), epsilon(1). F(0) has three main subunits: a(1), b(2) and c(10-14). The alpha and beta chains form an alternating ring which encloses part of the gamma chain. F(1) is attached to F(0) by a central stalk formed by the gamma and epsilon chains, while a peripheral stalk is formed by the delta and b chains.</text>
</comment>
<comment type="subcellular location">
    <subcellularLocation>
        <location evidence="1">Cell inner membrane</location>
        <topology evidence="1">Peripheral membrane protein</topology>
    </subcellularLocation>
</comment>
<comment type="similarity">
    <text evidence="1">Belongs to the ATPase delta chain family.</text>
</comment>
<dbReference type="EMBL" id="CP001600">
    <property type="protein sequence ID" value="ACR71020.1"/>
    <property type="molecule type" value="Genomic_DNA"/>
</dbReference>
<dbReference type="RefSeq" id="WP_015873048.1">
    <property type="nucleotide sequence ID" value="NZ_CP169062.1"/>
</dbReference>
<dbReference type="SMR" id="C5BF37"/>
<dbReference type="STRING" id="67780.B6E78_11070"/>
<dbReference type="GeneID" id="69540725"/>
<dbReference type="KEGG" id="eic:NT01EI_3909"/>
<dbReference type="PATRIC" id="fig|634503.3.peg.3480"/>
<dbReference type="HOGENOM" id="CLU_085114_3_0_6"/>
<dbReference type="OrthoDB" id="9816221at2"/>
<dbReference type="Proteomes" id="UP000001485">
    <property type="component" value="Chromosome"/>
</dbReference>
<dbReference type="GO" id="GO:0005886">
    <property type="term" value="C:plasma membrane"/>
    <property type="evidence" value="ECO:0007669"/>
    <property type="project" value="UniProtKB-SubCell"/>
</dbReference>
<dbReference type="GO" id="GO:0045259">
    <property type="term" value="C:proton-transporting ATP synthase complex"/>
    <property type="evidence" value="ECO:0007669"/>
    <property type="project" value="UniProtKB-KW"/>
</dbReference>
<dbReference type="GO" id="GO:0046933">
    <property type="term" value="F:proton-transporting ATP synthase activity, rotational mechanism"/>
    <property type="evidence" value="ECO:0007669"/>
    <property type="project" value="UniProtKB-UniRule"/>
</dbReference>
<dbReference type="Gene3D" id="1.10.520.20">
    <property type="entry name" value="N-terminal domain of the delta subunit of the F1F0-ATP synthase"/>
    <property type="match status" value="1"/>
</dbReference>
<dbReference type="HAMAP" id="MF_01416">
    <property type="entry name" value="ATP_synth_delta_bact"/>
    <property type="match status" value="1"/>
</dbReference>
<dbReference type="InterPro" id="IPR026015">
    <property type="entry name" value="ATP_synth_OSCP/delta_N_sf"/>
</dbReference>
<dbReference type="InterPro" id="IPR020781">
    <property type="entry name" value="ATPase_OSCP/d_CS"/>
</dbReference>
<dbReference type="InterPro" id="IPR000711">
    <property type="entry name" value="ATPase_OSCP/dsu"/>
</dbReference>
<dbReference type="NCBIfam" id="TIGR01145">
    <property type="entry name" value="ATP_synt_delta"/>
    <property type="match status" value="1"/>
</dbReference>
<dbReference type="NCBIfam" id="NF004402">
    <property type="entry name" value="PRK05758.2-2"/>
    <property type="match status" value="1"/>
</dbReference>
<dbReference type="NCBIfam" id="NF004404">
    <property type="entry name" value="PRK05758.2-5"/>
    <property type="match status" value="1"/>
</dbReference>
<dbReference type="PANTHER" id="PTHR11910">
    <property type="entry name" value="ATP SYNTHASE DELTA CHAIN"/>
    <property type="match status" value="1"/>
</dbReference>
<dbReference type="Pfam" id="PF00213">
    <property type="entry name" value="OSCP"/>
    <property type="match status" value="1"/>
</dbReference>
<dbReference type="PRINTS" id="PR00125">
    <property type="entry name" value="ATPASEDELTA"/>
</dbReference>
<dbReference type="SUPFAM" id="SSF47928">
    <property type="entry name" value="N-terminal domain of the delta subunit of the F1F0-ATP synthase"/>
    <property type="match status" value="1"/>
</dbReference>
<dbReference type="PROSITE" id="PS00389">
    <property type="entry name" value="ATPASE_DELTA"/>
    <property type="match status" value="1"/>
</dbReference>
<feature type="chain" id="PRO_1000215235" description="ATP synthase subunit delta">
    <location>
        <begin position="1"/>
        <end position="177"/>
    </location>
</feature>
<protein>
    <recommendedName>
        <fullName evidence="1">ATP synthase subunit delta</fullName>
    </recommendedName>
    <alternativeName>
        <fullName evidence="1">ATP synthase F(1) sector subunit delta</fullName>
    </alternativeName>
    <alternativeName>
        <fullName evidence="1">F-type ATPase subunit delta</fullName>
        <shortName evidence="1">F-ATPase subunit delta</shortName>
    </alternativeName>
</protein>
<sequence>MSEFITVARPYAKAAFDFAVEHNSLDRWQNMLTFSAEVTRNESVAEMLSGALAPETLAAFFIDICGDQLDESGQNFIKVMAENGRLQVIPDVLQQFIALRDAMEATADVEVTSAAPLTQAQLDKISAAMEQRLSRKVKLNCKIDKSVLAGVVIRAGDLVIDGSIRGRLDRLTDVLQS</sequence>
<evidence type="ECO:0000255" key="1">
    <source>
        <dbReference type="HAMAP-Rule" id="MF_01416"/>
    </source>
</evidence>
<name>ATPD_EDWI9</name>
<organism>
    <name type="scientific">Edwardsiella ictaluri (strain 93-146)</name>
    <dbReference type="NCBI Taxonomy" id="634503"/>
    <lineage>
        <taxon>Bacteria</taxon>
        <taxon>Pseudomonadati</taxon>
        <taxon>Pseudomonadota</taxon>
        <taxon>Gammaproteobacteria</taxon>
        <taxon>Enterobacterales</taxon>
        <taxon>Hafniaceae</taxon>
        <taxon>Edwardsiella</taxon>
    </lineage>
</organism>
<gene>
    <name evidence="1" type="primary">atpH</name>
    <name type="ordered locus">NT01EI_3909</name>
</gene>
<reference key="1">
    <citation type="submission" date="2009-03" db="EMBL/GenBank/DDBJ databases">
        <title>Complete genome sequence of Edwardsiella ictaluri 93-146.</title>
        <authorList>
            <person name="Williams M.L."/>
            <person name="Gillaspy A.F."/>
            <person name="Dyer D.W."/>
            <person name="Thune R.L."/>
            <person name="Waldbieser G.C."/>
            <person name="Schuster S.C."/>
            <person name="Gipson J."/>
            <person name="Zaitshik J."/>
            <person name="Landry C."/>
            <person name="Lawrence M.L."/>
        </authorList>
    </citation>
    <scope>NUCLEOTIDE SEQUENCE [LARGE SCALE GENOMIC DNA]</scope>
    <source>
        <strain>93-146</strain>
    </source>
</reference>
<keyword id="KW-0066">ATP synthesis</keyword>
<keyword id="KW-0997">Cell inner membrane</keyword>
<keyword id="KW-1003">Cell membrane</keyword>
<keyword id="KW-0139">CF(1)</keyword>
<keyword id="KW-0375">Hydrogen ion transport</keyword>
<keyword id="KW-0406">Ion transport</keyword>
<keyword id="KW-0472">Membrane</keyword>
<keyword id="KW-0813">Transport</keyword>
<accession>C5BF37</accession>